<feature type="chain" id="PRO_0000261945" description="Nucleotide-binding protein lpp1169">
    <location>
        <begin position="1"/>
        <end position="161"/>
    </location>
</feature>
<accession>Q5X601</accession>
<proteinExistence type="inferred from homology"/>
<organism>
    <name type="scientific">Legionella pneumophila (strain Paris)</name>
    <dbReference type="NCBI Taxonomy" id="297246"/>
    <lineage>
        <taxon>Bacteria</taxon>
        <taxon>Pseudomonadati</taxon>
        <taxon>Pseudomonadota</taxon>
        <taxon>Gammaproteobacteria</taxon>
        <taxon>Legionellales</taxon>
        <taxon>Legionellaceae</taxon>
        <taxon>Legionella</taxon>
    </lineage>
</organism>
<keyword id="KW-0547">Nucleotide-binding</keyword>
<sequence length="161" mass="18517">MPSFDIVSKMNEVDLRNAVDNAVREVSTRFDFRGVEATIELKDLTVTLRSESDFQVRQLEDLFRNHCSKRNLSTSGVDIEDEPVHSGKFYTLTMTFKQGIDQPTAKEIVKYIKETKAKVQTSIQGDKVRVTGKKRDDLQETIALLKKSNIELPLQYENFRD</sequence>
<evidence type="ECO:0000255" key="1">
    <source>
        <dbReference type="HAMAP-Rule" id="MF_00632"/>
    </source>
</evidence>
<comment type="function">
    <text evidence="1">Nucleotide-binding protein.</text>
</comment>
<comment type="similarity">
    <text evidence="1">Belongs to the YajQ family.</text>
</comment>
<protein>
    <recommendedName>
        <fullName evidence="1">Nucleotide-binding protein lpp1169</fullName>
    </recommendedName>
</protein>
<reference key="1">
    <citation type="journal article" date="2004" name="Nat. Genet.">
        <title>Evidence in the Legionella pneumophila genome for exploitation of host cell functions and high genome plasticity.</title>
        <authorList>
            <person name="Cazalet C."/>
            <person name="Rusniok C."/>
            <person name="Brueggemann H."/>
            <person name="Zidane N."/>
            <person name="Magnier A."/>
            <person name="Ma L."/>
            <person name="Tichit M."/>
            <person name="Jarraud S."/>
            <person name="Bouchier C."/>
            <person name="Vandenesch F."/>
            <person name="Kunst F."/>
            <person name="Etienne J."/>
            <person name="Glaser P."/>
            <person name="Buchrieser C."/>
        </authorList>
    </citation>
    <scope>NUCLEOTIDE SEQUENCE [LARGE SCALE GENOMIC DNA]</scope>
    <source>
        <strain>Paris</strain>
    </source>
</reference>
<name>Y1169_LEGPA</name>
<dbReference type="EMBL" id="CR628336">
    <property type="protein sequence ID" value="CAH12320.1"/>
    <property type="molecule type" value="Genomic_DNA"/>
</dbReference>
<dbReference type="RefSeq" id="WP_011213523.1">
    <property type="nucleotide sequence ID" value="NC_006368.1"/>
</dbReference>
<dbReference type="SMR" id="Q5X601"/>
<dbReference type="KEGG" id="lpp:lpp1169"/>
<dbReference type="LegioList" id="lpp1169"/>
<dbReference type="HOGENOM" id="CLU_099839_1_0_6"/>
<dbReference type="GO" id="GO:0005829">
    <property type="term" value="C:cytosol"/>
    <property type="evidence" value="ECO:0007669"/>
    <property type="project" value="TreeGrafter"/>
</dbReference>
<dbReference type="GO" id="GO:0000166">
    <property type="term" value="F:nucleotide binding"/>
    <property type="evidence" value="ECO:0007669"/>
    <property type="project" value="TreeGrafter"/>
</dbReference>
<dbReference type="CDD" id="cd11740">
    <property type="entry name" value="YajQ_like"/>
    <property type="match status" value="1"/>
</dbReference>
<dbReference type="Gene3D" id="3.30.70.860">
    <property type="match status" value="1"/>
</dbReference>
<dbReference type="Gene3D" id="3.30.70.990">
    <property type="entry name" value="YajQ-like, domain 2"/>
    <property type="match status" value="1"/>
</dbReference>
<dbReference type="HAMAP" id="MF_00632">
    <property type="entry name" value="YajQ"/>
    <property type="match status" value="1"/>
</dbReference>
<dbReference type="InterPro" id="IPR007551">
    <property type="entry name" value="DUF520"/>
</dbReference>
<dbReference type="InterPro" id="IPR035571">
    <property type="entry name" value="UPF0234-like_C"/>
</dbReference>
<dbReference type="InterPro" id="IPR035570">
    <property type="entry name" value="UPF0234_N"/>
</dbReference>
<dbReference type="InterPro" id="IPR036183">
    <property type="entry name" value="YajQ-like_sf"/>
</dbReference>
<dbReference type="NCBIfam" id="NF003819">
    <property type="entry name" value="PRK05412.1"/>
    <property type="match status" value="1"/>
</dbReference>
<dbReference type="PANTHER" id="PTHR30476">
    <property type="entry name" value="UPF0234 PROTEIN YAJQ"/>
    <property type="match status" value="1"/>
</dbReference>
<dbReference type="PANTHER" id="PTHR30476:SF0">
    <property type="entry name" value="UPF0234 PROTEIN YAJQ"/>
    <property type="match status" value="1"/>
</dbReference>
<dbReference type="Pfam" id="PF04461">
    <property type="entry name" value="DUF520"/>
    <property type="match status" value="1"/>
</dbReference>
<dbReference type="SUPFAM" id="SSF89963">
    <property type="entry name" value="YajQ-like"/>
    <property type="match status" value="2"/>
</dbReference>
<gene>
    <name type="ordered locus">lpp1169</name>
</gene>